<keyword id="KW-0963">Cytoplasm</keyword>
<keyword id="KW-1185">Reference proteome</keyword>
<comment type="function">
    <text evidence="1">Modulates RecA activity.</text>
</comment>
<comment type="subcellular location">
    <subcellularLocation>
        <location evidence="3">Cytoplasm</location>
    </subcellularLocation>
</comment>
<comment type="similarity">
    <text evidence="3">Belongs to the RecX family.</text>
</comment>
<organism>
    <name type="scientific">Myxococcus xanthus (strain DK1622)</name>
    <dbReference type="NCBI Taxonomy" id="246197"/>
    <lineage>
        <taxon>Bacteria</taxon>
        <taxon>Pseudomonadati</taxon>
        <taxon>Myxococcota</taxon>
        <taxon>Myxococcia</taxon>
        <taxon>Myxococcales</taxon>
        <taxon>Cystobacterineae</taxon>
        <taxon>Myxococcaceae</taxon>
        <taxon>Myxococcus</taxon>
    </lineage>
</organism>
<sequence length="187" mass="20887">MDEARGGPDKKKERGPKRPRKVSPTYLENAALHYLKRYAATKSQLQRVLLRRVDRSIKFHGGERGEALAWVEALVAKLVRNGLLNDEAYAQMKAHSLRASGRSTRVIAQKLRLKGVPAEVVAKKVADATHEVSEEDAARIWARKKRLGPFRTQPGTREENRKRDLAALARAGFSFGIAKKVIDSNPA</sequence>
<accession>Q8VQX6</accession>
<accession>Q1CXP8</accession>
<evidence type="ECO:0000250" key="1"/>
<evidence type="ECO:0000256" key="2">
    <source>
        <dbReference type="SAM" id="MobiDB-lite"/>
    </source>
</evidence>
<evidence type="ECO:0000305" key="3"/>
<proteinExistence type="inferred from homology"/>
<name>RECX_MYXXD</name>
<protein>
    <recommendedName>
        <fullName>Regulatory protein RecX</fullName>
    </recommendedName>
</protein>
<gene>
    <name type="primary">recX</name>
    <name type="ordered locus">MXAN_6708</name>
</gene>
<dbReference type="EMBL" id="AF449411">
    <property type="protein sequence ID" value="AAL56604.1"/>
    <property type="molecule type" value="Genomic_DNA"/>
</dbReference>
<dbReference type="EMBL" id="CP000113">
    <property type="protein sequence ID" value="ABF90164.1"/>
    <property type="molecule type" value="Genomic_DNA"/>
</dbReference>
<dbReference type="RefSeq" id="WP_011556633.1">
    <property type="nucleotide sequence ID" value="NC_008095.1"/>
</dbReference>
<dbReference type="SMR" id="Q8VQX6"/>
<dbReference type="STRING" id="246197.MXAN_6708"/>
<dbReference type="EnsemblBacteria" id="ABF90164">
    <property type="protein sequence ID" value="ABF90164"/>
    <property type="gene ID" value="MXAN_6708"/>
</dbReference>
<dbReference type="GeneID" id="41363901"/>
<dbReference type="KEGG" id="mxa:MXAN_6708"/>
<dbReference type="eggNOG" id="COG2137">
    <property type="taxonomic scope" value="Bacteria"/>
</dbReference>
<dbReference type="HOGENOM" id="CLU_090972_2_0_7"/>
<dbReference type="OrthoDB" id="5507982at2"/>
<dbReference type="Proteomes" id="UP000002402">
    <property type="component" value="Chromosome"/>
</dbReference>
<dbReference type="GO" id="GO:0005737">
    <property type="term" value="C:cytoplasm"/>
    <property type="evidence" value="ECO:0007669"/>
    <property type="project" value="UniProtKB-SubCell"/>
</dbReference>
<dbReference type="GO" id="GO:0006282">
    <property type="term" value="P:regulation of DNA repair"/>
    <property type="evidence" value="ECO:0007669"/>
    <property type="project" value="UniProtKB-UniRule"/>
</dbReference>
<dbReference type="Gene3D" id="1.10.10.10">
    <property type="entry name" value="Winged helix-like DNA-binding domain superfamily/Winged helix DNA-binding domain"/>
    <property type="match status" value="1"/>
</dbReference>
<dbReference type="HAMAP" id="MF_01114">
    <property type="entry name" value="RecX"/>
    <property type="match status" value="1"/>
</dbReference>
<dbReference type="InterPro" id="IPR053924">
    <property type="entry name" value="RecX_HTH_2nd"/>
</dbReference>
<dbReference type="InterPro" id="IPR003783">
    <property type="entry name" value="Regulatory_RecX"/>
</dbReference>
<dbReference type="InterPro" id="IPR036388">
    <property type="entry name" value="WH-like_DNA-bd_sf"/>
</dbReference>
<dbReference type="PANTHER" id="PTHR33602">
    <property type="entry name" value="REGULATORY PROTEIN RECX FAMILY PROTEIN"/>
    <property type="match status" value="1"/>
</dbReference>
<dbReference type="PANTHER" id="PTHR33602:SF1">
    <property type="entry name" value="REGULATORY PROTEIN RECX FAMILY PROTEIN"/>
    <property type="match status" value="1"/>
</dbReference>
<dbReference type="Pfam" id="PF02631">
    <property type="entry name" value="RecX_HTH2"/>
    <property type="match status" value="1"/>
</dbReference>
<reference key="1">
    <citation type="journal article" date="2002" name="J. Bacteriol.">
        <title>Mapping of Myxococcus xanthus social motility dsp mutations to the dif genes.</title>
        <authorList>
            <person name="Lancero H."/>
            <person name="Brofft J.E."/>
            <person name="Downard J."/>
            <person name="Birren B.W."/>
            <person name="Nusbaum C."/>
            <person name="Naylor J."/>
            <person name="Shi W."/>
            <person name="Shimkets L.J."/>
        </authorList>
    </citation>
    <scope>NUCLEOTIDE SEQUENCE [GENOMIC DNA]</scope>
</reference>
<reference key="2">
    <citation type="journal article" date="2006" name="Proc. Natl. Acad. Sci. U.S.A.">
        <title>Evolution of sensory complexity recorded in a myxobacterial genome.</title>
        <authorList>
            <person name="Goldman B.S."/>
            <person name="Nierman W.C."/>
            <person name="Kaiser D."/>
            <person name="Slater S.C."/>
            <person name="Durkin A.S."/>
            <person name="Eisen J.A."/>
            <person name="Ronning C.M."/>
            <person name="Barbazuk W.B."/>
            <person name="Blanchard M."/>
            <person name="Field C."/>
            <person name="Halling C."/>
            <person name="Hinkle G."/>
            <person name="Iartchuk O."/>
            <person name="Kim H.S."/>
            <person name="Mackenzie C."/>
            <person name="Madupu R."/>
            <person name="Miller N."/>
            <person name="Shvartsbeyn A."/>
            <person name="Sullivan S.A."/>
            <person name="Vaudin M."/>
            <person name="Wiegand R."/>
            <person name="Kaplan H.B."/>
        </authorList>
    </citation>
    <scope>NUCLEOTIDE SEQUENCE [LARGE SCALE GENOMIC DNA]</scope>
    <source>
        <strain>DK1622</strain>
    </source>
</reference>
<feature type="chain" id="PRO_0000162452" description="Regulatory protein RecX">
    <location>
        <begin position="1"/>
        <end position="187"/>
    </location>
</feature>
<feature type="region of interest" description="Disordered" evidence="2">
    <location>
        <begin position="1"/>
        <end position="23"/>
    </location>
</feature>
<feature type="compositionally biased region" description="Basic and acidic residues" evidence="2">
    <location>
        <begin position="1"/>
        <end position="12"/>
    </location>
</feature>